<reference key="1">
    <citation type="journal article" date="2003" name="Nucleic Acids Res.">
        <title>The complete genome sequence and analysis of Corynebacterium diphtheriae NCTC13129.</title>
        <authorList>
            <person name="Cerdeno-Tarraga A.-M."/>
            <person name="Efstratiou A."/>
            <person name="Dover L.G."/>
            <person name="Holden M.T.G."/>
            <person name="Pallen M.J."/>
            <person name="Bentley S.D."/>
            <person name="Besra G.S."/>
            <person name="Churcher C.M."/>
            <person name="James K.D."/>
            <person name="De Zoysa A."/>
            <person name="Chillingworth T."/>
            <person name="Cronin A."/>
            <person name="Dowd L."/>
            <person name="Feltwell T."/>
            <person name="Hamlin N."/>
            <person name="Holroyd S."/>
            <person name="Jagels K."/>
            <person name="Moule S."/>
            <person name="Quail M.A."/>
            <person name="Rabbinowitsch E."/>
            <person name="Rutherford K.M."/>
            <person name="Thomson N.R."/>
            <person name="Unwin L."/>
            <person name="Whitehead S."/>
            <person name="Barrell B.G."/>
            <person name="Parkhill J."/>
        </authorList>
    </citation>
    <scope>NUCLEOTIDE SEQUENCE [LARGE SCALE GENOMIC DNA]</scope>
    <source>
        <strain>ATCC 700971 / NCTC 13129 / Biotype gravis</strain>
    </source>
</reference>
<sequence length="250" mass="26969">MSGHSKWATTKHKKAANDAKRGKEFAKLIKNIEVAARTGGGDPSANPTLDDMIKKAKKASVPNDNIERARKRGSGEEAGGADWQTIMYEGYGPNGVAVLIECLTDNRNRAASEVRTAMSKNGGNMAENGAVSYMFKRRGFVLVNKGELTEDDVLMAVLDAGAEEVSDAGDKFEILSAPGDVAAIRDALAEAEIEVEDSDSDFRADVLVPLEANDARKIFRLIDALEESDDVQNVYTNMDLSDEVLAELEA</sequence>
<protein>
    <recommendedName>
        <fullName evidence="1">Probable transcriptional regulatory protein DIP1378</fullName>
    </recommendedName>
</protein>
<proteinExistence type="inferred from homology"/>
<dbReference type="EMBL" id="BX248358">
    <property type="protein sequence ID" value="CAE49909.1"/>
    <property type="molecule type" value="Genomic_DNA"/>
</dbReference>
<dbReference type="RefSeq" id="WP_010935023.1">
    <property type="nucleotide sequence ID" value="NC_002935.2"/>
</dbReference>
<dbReference type="SMR" id="P62034"/>
<dbReference type="STRING" id="257309.DIP1378"/>
<dbReference type="KEGG" id="cdi:DIP1378"/>
<dbReference type="HOGENOM" id="CLU_062974_2_2_11"/>
<dbReference type="Proteomes" id="UP000002198">
    <property type="component" value="Chromosome"/>
</dbReference>
<dbReference type="GO" id="GO:0005829">
    <property type="term" value="C:cytosol"/>
    <property type="evidence" value="ECO:0007669"/>
    <property type="project" value="TreeGrafter"/>
</dbReference>
<dbReference type="GO" id="GO:0003677">
    <property type="term" value="F:DNA binding"/>
    <property type="evidence" value="ECO:0007669"/>
    <property type="project" value="UniProtKB-UniRule"/>
</dbReference>
<dbReference type="GO" id="GO:0006355">
    <property type="term" value="P:regulation of DNA-templated transcription"/>
    <property type="evidence" value="ECO:0007669"/>
    <property type="project" value="UniProtKB-UniRule"/>
</dbReference>
<dbReference type="FunFam" id="1.10.10.200:FF:000002">
    <property type="entry name" value="Probable transcriptional regulatory protein CLM62_37755"/>
    <property type="match status" value="1"/>
</dbReference>
<dbReference type="Gene3D" id="1.10.10.200">
    <property type="match status" value="1"/>
</dbReference>
<dbReference type="Gene3D" id="3.30.70.980">
    <property type="match status" value="2"/>
</dbReference>
<dbReference type="HAMAP" id="MF_00693">
    <property type="entry name" value="Transcrip_reg_TACO1"/>
    <property type="match status" value="1"/>
</dbReference>
<dbReference type="InterPro" id="IPR017856">
    <property type="entry name" value="Integrase-like_N"/>
</dbReference>
<dbReference type="InterPro" id="IPR048300">
    <property type="entry name" value="TACO1_YebC-like_2nd/3rd_dom"/>
</dbReference>
<dbReference type="InterPro" id="IPR049083">
    <property type="entry name" value="TACO1_YebC_N"/>
</dbReference>
<dbReference type="InterPro" id="IPR002876">
    <property type="entry name" value="Transcrip_reg_TACO1-like"/>
</dbReference>
<dbReference type="InterPro" id="IPR026564">
    <property type="entry name" value="Transcrip_reg_TACO1-like_dom3"/>
</dbReference>
<dbReference type="InterPro" id="IPR029072">
    <property type="entry name" value="YebC-like"/>
</dbReference>
<dbReference type="NCBIfam" id="NF001030">
    <property type="entry name" value="PRK00110.1"/>
    <property type="match status" value="1"/>
</dbReference>
<dbReference type="NCBIfam" id="NF009044">
    <property type="entry name" value="PRK12378.1"/>
    <property type="match status" value="1"/>
</dbReference>
<dbReference type="NCBIfam" id="TIGR01033">
    <property type="entry name" value="YebC/PmpR family DNA-binding transcriptional regulator"/>
    <property type="match status" value="1"/>
</dbReference>
<dbReference type="PANTHER" id="PTHR12532:SF6">
    <property type="entry name" value="TRANSCRIPTIONAL REGULATORY PROTEIN YEBC-RELATED"/>
    <property type="match status" value="1"/>
</dbReference>
<dbReference type="PANTHER" id="PTHR12532">
    <property type="entry name" value="TRANSLATIONAL ACTIVATOR OF CYTOCHROME C OXIDASE 1"/>
    <property type="match status" value="1"/>
</dbReference>
<dbReference type="Pfam" id="PF20772">
    <property type="entry name" value="TACO1_YebC_N"/>
    <property type="match status" value="1"/>
</dbReference>
<dbReference type="Pfam" id="PF01709">
    <property type="entry name" value="Transcrip_reg"/>
    <property type="match status" value="1"/>
</dbReference>
<dbReference type="SUPFAM" id="SSF75625">
    <property type="entry name" value="YebC-like"/>
    <property type="match status" value="1"/>
</dbReference>
<name>Y1378_CORDI</name>
<comment type="subcellular location">
    <subcellularLocation>
        <location evidence="1">Cytoplasm</location>
    </subcellularLocation>
</comment>
<comment type="similarity">
    <text evidence="1">Belongs to the TACO1 family.</text>
</comment>
<keyword id="KW-0963">Cytoplasm</keyword>
<keyword id="KW-0238">DNA-binding</keyword>
<keyword id="KW-1185">Reference proteome</keyword>
<keyword id="KW-0804">Transcription</keyword>
<keyword id="KW-0805">Transcription regulation</keyword>
<accession>P62034</accession>
<feature type="chain" id="PRO_0000175792" description="Probable transcriptional regulatory protein DIP1378">
    <location>
        <begin position="1"/>
        <end position="250"/>
    </location>
</feature>
<feature type="region of interest" description="Disordered" evidence="2">
    <location>
        <begin position="1"/>
        <end position="22"/>
    </location>
</feature>
<organism>
    <name type="scientific">Corynebacterium diphtheriae (strain ATCC 700971 / NCTC 13129 / Biotype gravis)</name>
    <dbReference type="NCBI Taxonomy" id="257309"/>
    <lineage>
        <taxon>Bacteria</taxon>
        <taxon>Bacillati</taxon>
        <taxon>Actinomycetota</taxon>
        <taxon>Actinomycetes</taxon>
        <taxon>Mycobacteriales</taxon>
        <taxon>Corynebacteriaceae</taxon>
        <taxon>Corynebacterium</taxon>
    </lineage>
</organism>
<gene>
    <name type="ordered locus">DIP1378</name>
</gene>
<evidence type="ECO:0000255" key="1">
    <source>
        <dbReference type="HAMAP-Rule" id="MF_00693"/>
    </source>
</evidence>
<evidence type="ECO:0000256" key="2">
    <source>
        <dbReference type="SAM" id="MobiDB-lite"/>
    </source>
</evidence>